<sequence>MSEQNAQGADEVVDLNNEMKARREKLAALREQGIPFPNDFRRDRTSDQLHAEFDAKEAEELEALNIEVSVAGRMMTRRIMGKASFVTLQDVGGRIQLYVARDDLPEGVYNEQFKKWDLGDILGAKGKLFKTKTGELSIHCTELRLLTKALRPLPDKFHGLQDQEARYRQRYLDLISNDESRNTFKTRSKILAGIRQFMVARGFMEVETPMMQVIPGGASARPFITHHNALDLDMYLRIAPELYLKRLVVGGFERVFEINRNFRNEGISVRHNPEFTMMELYMAYADYKDLIELTESLFRTLAQDVLGTTQVPYGDEVFDFGKPFEKLTMREAIKKYRPETDMADLDNFDSAKAIAESIGIHVEKSWGLGRIVTEIFDEVAEAHLIQPTFITEYPAEVSPLARRNDVNPEITDRFEFFIGGREIGNGFSELNDAEDQAQRFLDQVNAKAAGDDEAMFYDEDYVTALEHGLPPTAGLGIGIDRMVMLFTNSHTIRDVILFPAMRPVK</sequence>
<dbReference type="EC" id="6.1.1.6" evidence="1"/>
<dbReference type="EMBL" id="AM933172">
    <property type="protein sequence ID" value="CAR34461.1"/>
    <property type="molecule type" value="Genomic_DNA"/>
</dbReference>
<dbReference type="RefSeq" id="WP_000003339.1">
    <property type="nucleotide sequence ID" value="NC_011294.1"/>
</dbReference>
<dbReference type="SMR" id="B5QXG7"/>
<dbReference type="KEGG" id="set:SEN2883"/>
<dbReference type="HOGENOM" id="CLU_008255_6_0_6"/>
<dbReference type="Proteomes" id="UP000000613">
    <property type="component" value="Chromosome"/>
</dbReference>
<dbReference type="GO" id="GO:0005829">
    <property type="term" value="C:cytosol"/>
    <property type="evidence" value="ECO:0007669"/>
    <property type="project" value="TreeGrafter"/>
</dbReference>
<dbReference type="GO" id="GO:0005524">
    <property type="term" value="F:ATP binding"/>
    <property type="evidence" value="ECO:0007669"/>
    <property type="project" value="UniProtKB-UniRule"/>
</dbReference>
<dbReference type="GO" id="GO:0004824">
    <property type="term" value="F:lysine-tRNA ligase activity"/>
    <property type="evidence" value="ECO:0007669"/>
    <property type="project" value="UniProtKB-UniRule"/>
</dbReference>
<dbReference type="GO" id="GO:0000287">
    <property type="term" value="F:magnesium ion binding"/>
    <property type="evidence" value="ECO:0007669"/>
    <property type="project" value="UniProtKB-UniRule"/>
</dbReference>
<dbReference type="GO" id="GO:0000049">
    <property type="term" value="F:tRNA binding"/>
    <property type="evidence" value="ECO:0007669"/>
    <property type="project" value="TreeGrafter"/>
</dbReference>
<dbReference type="GO" id="GO:0006430">
    <property type="term" value="P:lysyl-tRNA aminoacylation"/>
    <property type="evidence" value="ECO:0007669"/>
    <property type="project" value="UniProtKB-UniRule"/>
</dbReference>
<dbReference type="CDD" id="cd00775">
    <property type="entry name" value="LysRS_core"/>
    <property type="match status" value="1"/>
</dbReference>
<dbReference type="CDD" id="cd04322">
    <property type="entry name" value="LysRS_N"/>
    <property type="match status" value="1"/>
</dbReference>
<dbReference type="FunFam" id="2.40.50.140:FF:000024">
    <property type="entry name" value="Lysine--tRNA ligase"/>
    <property type="match status" value="1"/>
</dbReference>
<dbReference type="FunFam" id="3.30.930.10:FF:000001">
    <property type="entry name" value="Lysine--tRNA ligase"/>
    <property type="match status" value="1"/>
</dbReference>
<dbReference type="Gene3D" id="3.30.930.10">
    <property type="entry name" value="Bira Bifunctional Protein, Domain 2"/>
    <property type="match status" value="1"/>
</dbReference>
<dbReference type="Gene3D" id="2.40.50.140">
    <property type="entry name" value="Nucleic acid-binding proteins"/>
    <property type="match status" value="1"/>
</dbReference>
<dbReference type="HAMAP" id="MF_00252">
    <property type="entry name" value="Lys_tRNA_synth_class2"/>
    <property type="match status" value="1"/>
</dbReference>
<dbReference type="InterPro" id="IPR004364">
    <property type="entry name" value="Aa-tRNA-synt_II"/>
</dbReference>
<dbReference type="InterPro" id="IPR006195">
    <property type="entry name" value="aa-tRNA-synth_II"/>
</dbReference>
<dbReference type="InterPro" id="IPR045864">
    <property type="entry name" value="aa-tRNA-synth_II/BPL/LPL"/>
</dbReference>
<dbReference type="InterPro" id="IPR002313">
    <property type="entry name" value="Lys-tRNA-ligase_II"/>
</dbReference>
<dbReference type="InterPro" id="IPR034762">
    <property type="entry name" value="Lys-tRNA-ligase_II_bac/euk"/>
</dbReference>
<dbReference type="InterPro" id="IPR044136">
    <property type="entry name" value="Lys-tRNA-ligase_II_N"/>
</dbReference>
<dbReference type="InterPro" id="IPR018149">
    <property type="entry name" value="Lys-tRNA-synth_II_C"/>
</dbReference>
<dbReference type="InterPro" id="IPR012340">
    <property type="entry name" value="NA-bd_OB-fold"/>
</dbReference>
<dbReference type="InterPro" id="IPR004365">
    <property type="entry name" value="NA-bd_OB_tRNA"/>
</dbReference>
<dbReference type="NCBIfam" id="TIGR00499">
    <property type="entry name" value="lysS_bact"/>
    <property type="match status" value="1"/>
</dbReference>
<dbReference type="NCBIfam" id="NF001756">
    <property type="entry name" value="PRK00484.1"/>
    <property type="match status" value="1"/>
</dbReference>
<dbReference type="NCBIfam" id="NF009101">
    <property type="entry name" value="PRK12445.1"/>
    <property type="match status" value="1"/>
</dbReference>
<dbReference type="PANTHER" id="PTHR42918:SF15">
    <property type="entry name" value="LYSINE--TRNA LIGASE, CHLOROPLASTIC_MITOCHONDRIAL"/>
    <property type="match status" value="1"/>
</dbReference>
<dbReference type="PANTHER" id="PTHR42918">
    <property type="entry name" value="LYSYL-TRNA SYNTHETASE"/>
    <property type="match status" value="1"/>
</dbReference>
<dbReference type="Pfam" id="PF00152">
    <property type="entry name" value="tRNA-synt_2"/>
    <property type="match status" value="1"/>
</dbReference>
<dbReference type="Pfam" id="PF01336">
    <property type="entry name" value="tRNA_anti-codon"/>
    <property type="match status" value="1"/>
</dbReference>
<dbReference type="PIRSF" id="PIRSF039101">
    <property type="entry name" value="LysRS2"/>
    <property type="match status" value="1"/>
</dbReference>
<dbReference type="PRINTS" id="PR00982">
    <property type="entry name" value="TRNASYNTHLYS"/>
</dbReference>
<dbReference type="SUPFAM" id="SSF55681">
    <property type="entry name" value="Class II aaRS and biotin synthetases"/>
    <property type="match status" value="1"/>
</dbReference>
<dbReference type="SUPFAM" id="SSF50249">
    <property type="entry name" value="Nucleic acid-binding proteins"/>
    <property type="match status" value="1"/>
</dbReference>
<dbReference type="PROSITE" id="PS50862">
    <property type="entry name" value="AA_TRNA_LIGASE_II"/>
    <property type="match status" value="1"/>
</dbReference>
<protein>
    <recommendedName>
        <fullName evidence="1">Lysine--tRNA ligase</fullName>
        <ecNumber evidence="1">6.1.1.6</ecNumber>
    </recommendedName>
    <alternativeName>
        <fullName evidence="1">Lysyl-tRNA synthetase</fullName>
        <shortName evidence="1">LysRS</shortName>
    </alternativeName>
</protein>
<comment type="catalytic activity">
    <reaction evidence="1">
        <text>tRNA(Lys) + L-lysine + ATP = L-lysyl-tRNA(Lys) + AMP + diphosphate</text>
        <dbReference type="Rhea" id="RHEA:20792"/>
        <dbReference type="Rhea" id="RHEA-COMP:9696"/>
        <dbReference type="Rhea" id="RHEA-COMP:9697"/>
        <dbReference type="ChEBI" id="CHEBI:30616"/>
        <dbReference type="ChEBI" id="CHEBI:32551"/>
        <dbReference type="ChEBI" id="CHEBI:33019"/>
        <dbReference type="ChEBI" id="CHEBI:78442"/>
        <dbReference type="ChEBI" id="CHEBI:78529"/>
        <dbReference type="ChEBI" id="CHEBI:456215"/>
        <dbReference type="EC" id="6.1.1.6"/>
    </reaction>
</comment>
<comment type="cofactor">
    <cofactor evidence="1">
        <name>Mg(2+)</name>
        <dbReference type="ChEBI" id="CHEBI:18420"/>
    </cofactor>
    <text evidence="1">Binds 3 Mg(2+) ions per subunit.</text>
</comment>
<comment type="subunit">
    <text evidence="1">Homodimer.</text>
</comment>
<comment type="subcellular location">
    <subcellularLocation>
        <location evidence="1">Cytoplasm</location>
    </subcellularLocation>
</comment>
<comment type="similarity">
    <text evidence="1">Belongs to the class-II aminoacyl-tRNA synthetase family.</text>
</comment>
<reference key="1">
    <citation type="journal article" date="2008" name="Genome Res.">
        <title>Comparative genome analysis of Salmonella enteritidis PT4 and Salmonella gallinarum 287/91 provides insights into evolutionary and host adaptation pathways.</title>
        <authorList>
            <person name="Thomson N.R."/>
            <person name="Clayton D.J."/>
            <person name="Windhorst D."/>
            <person name="Vernikos G."/>
            <person name="Davidson S."/>
            <person name="Churcher C."/>
            <person name="Quail M.A."/>
            <person name="Stevens M."/>
            <person name="Jones M.A."/>
            <person name="Watson M."/>
            <person name="Barron A."/>
            <person name="Layton A."/>
            <person name="Pickard D."/>
            <person name="Kingsley R.A."/>
            <person name="Bignell A."/>
            <person name="Clark L."/>
            <person name="Harris B."/>
            <person name="Ormond D."/>
            <person name="Abdellah Z."/>
            <person name="Brooks K."/>
            <person name="Cherevach I."/>
            <person name="Chillingworth T."/>
            <person name="Woodward J."/>
            <person name="Norberczak H."/>
            <person name="Lord A."/>
            <person name="Arrowsmith C."/>
            <person name="Jagels K."/>
            <person name="Moule S."/>
            <person name="Mungall K."/>
            <person name="Saunders M."/>
            <person name="Whitehead S."/>
            <person name="Chabalgoity J.A."/>
            <person name="Maskell D."/>
            <person name="Humphreys T."/>
            <person name="Roberts M."/>
            <person name="Barrow P.A."/>
            <person name="Dougan G."/>
            <person name="Parkhill J."/>
        </authorList>
    </citation>
    <scope>NUCLEOTIDE SEQUENCE [LARGE SCALE GENOMIC DNA]</scope>
    <source>
        <strain>P125109</strain>
    </source>
</reference>
<feature type="chain" id="PRO_1000101142" description="Lysine--tRNA ligase">
    <location>
        <begin position="1"/>
        <end position="505"/>
    </location>
</feature>
<feature type="binding site" evidence="1">
    <location>
        <position position="415"/>
    </location>
    <ligand>
        <name>Mg(2+)</name>
        <dbReference type="ChEBI" id="CHEBI:18420"/>
        <label>1</label>
    </ligand>
</feature>
<feature type="binding site" evidence="1">
    <location>
        <position position="422"/>
    </location>
    <ligand>
        <name>Mg(2+)</name>
        <dbReference type="ChEBI" id="CHEBI:18420"/>
        <label>1</label>
    </ligand>
</feature>
<feature type="binding site" evidence="1">
    <location>
        <position position="422"/>
    </location>
    <ligand>
        <name>Mg(2+)</name>
        <dbReference type="ChEBI" id="CHEBI:18420"/>
        <label>2</label>
    </ligand>
</feature>
<accession>B5QXG7</accession>
<gene>
    <name evidence="1" type="primary">lysS</name>
    <name type="ordered locus">SEN2883</name>
</gene>
<evidence type="ECO:0000255" key="1">
    <source>
        <dbReference type="HAMAP-Rule" id="MF_00252"/>
    </source>
</evidence>
<keyword id="KW-0030">Aminoacyl-tRNA synthetase</keyword>
<keyword id="KW-0067">ATP-binding</keyword>
<keyword id="KW-0963">Cytoplasm</keyword>
<keyword id="KW-0436">Ligase</keyword>
<keyword id="KW-0460">Magnesium</keyword>
<keyword id="KW-0479">Metal-binding</keyword>
<keyword id="KW-0547">Nucleotide-binding</keyword>
<keyword id="KW-0648">Protein biosynthesis</keyword>
<proteinExistence type="inferred from homology"/>
<organism>
    <name type="scientific">Salmonella enteritidis PT4 (strain P125109)</name>
    <dbReference type="NCBI Taxonomy" id="550537"/>
    <lineage>
        <taxon>Bacteria</taxon>
        <taxon>Pseudomonadati</taxon>
        <taxon>Pseudomonadota</taxon>
        <taxon>Gammaproteobacteria</taxon>
        <taxon>Enterobacterales</taxon>
        <taxon>Enterobacteriaceae</taxon>
        <taxon>Salmonella</taxon>
    </lineage>
</organism>
<name>SYK_SALEP</name>